<organism>
    <name type="scientific">Aquifex aeolicus (strain VF5)</name>
    <dbReference type="NCBI Taxonomy" id="224324"/>
    <lineage>
        <taxon>Bacteria</taxon>
        <taxon>Pseudomonadati</taxon>
        <taxon>Aquificota</taxon>
        <taxon>Aquificia</taxon>
        <taxon>Aquificales</taxon>
        <taxon>Aquificaceae</taxon>
        <taxon>Aquifex</taxon>
    </lineage>
</organism>
<keyword id="KW-0067">ATP-binding</keyword>
<keyword id="KW-0131">Cell cycle</keyword>
<keyword id="KW-0132">Cell division</keyword>
<keyword id="KW-0133">Cell shape</keyword>
<keyword id="KW-0961">Cell wall biogenesis/degradation</keyword>
<keyword id="KW-0963">Cytoplasm</keyword>
<keyword id="KW-0436">Ligase</keyword>
<keyword id="KW-0460">Magnesium</keyword>
<keyword id="KW-0547">Nucleotide-binding</keyword>
<keyword id="KW-0573">Peptidoglycan synthesis</keyword>
<keyword id="KW-1185">Reference proteome</keyword>
<feature type="chain" id="PRO_0000101862" description="UDP-N-acetylmuramoyl-L-alanyl-D-glutamate--2,6-diaminopimelate ligase">
    <location>
        <begin position="1"/>
        <end position="482"/>
    </location>
</feature>
<feature type="short sequence motif" description="Meso-diaminopimelate recognition motif">
    <location>
        <begin position="396"/>
        <end position="399"/>
    </location>
</feature>
<feature type="binding site" evidence="1">
    <location>
        <position position="28"/>
    </location>
    <ligand>
        <name>UDP-N-acetyl-alpha-D-muramoyl-L-alanyl-D-glutamate</name>
        <dbReference type="ChEBI" id="CHEBI:83900"/>
    </ligand>
</feature>
<feature type="binding site" evidence="1">
    <location>
        <position position="30"/>
    </location>
    <ligand>
        <name>UDP-N-acetyl-alpha-D-muramoyl-L-alanyl-D-glutamate</name>
        <dbReference type="ChEBI" id="CHEBI:83900"/>
    </ligand>
</feature>
<feature type="binding site" evidence="1">
    <location>
        <begin position="108"/>
        <end position="114"/>
    </location>
    <ligand>
        <name>ATP</name>
        <dbReference type="ChEBI" id="CHEBI:30616"/>
    </ligand>
</feature>
<feature type="binding site" evidence="1">
    <location>
        <begin position="150"/>
        <end position="151"/>
    </location>
    <ligand>
        <name>UDP-N-acetyl-alpha-D-muramoyl-L-alanyl-D-glutamate</name>
        <dbReference type="ChEBI" id="CHEBI:83900"/>
    </ligand>
</feature>
<feature type="binding site" evidence="1">
    <location>
        <position position="177"/>
    </location>
    <ligand>
        <name>UDP-N-acetyl-alpha-D-muramoyl-L-alanyl-D-glutamate</name>
        <dbReference type="ChEBI" id="CHEBI:83900"/>
    </ligand>
</feature>
<feature type="binding site" evidence="1">
    <location>
        <position position="183"/>
    </location>
    <ligand>
        <name>UDP-N-acetyl-alpha-D-muramoyl-L-alanyl-D-glutamate</name>
        <dbReference type="ChEBI" id="CHEBI:83900"/>
    </ligand>
</feature>
<feature type="binding site" evidence="1">
    <location>
        <position position="185"/>
    </location>
    <ligand>
        <name>UDP-N-acetyl-alpha-D-muramoyl-L-alanyl-D-glutamate</name>
        <dbReference type="ChEBI" id="CHEBI:83900"/>
    </ligand>
</feature>
<feature type="binding site" evidence="1">
    <location>
        <position position="372"/>
    </location>
    <ligand>
        <name>meso-2,6-diaminopimelate</name>
        <dbReference type="ChEBI" id="CHEBI:57791"/>
    </ligand>
</feature>
<feature type="binding site" evidence="1">
    <location>
        <begin position="396"/>
        <end position="399"/>
    </location>
    <ligand>
        <name>meso-2,6-diaminopimelate</name>
        <dbReference type="ChEBI" id="CHEBI:57791"/>
    </ligand>
</feature>
<feature type="binding site" evidence="1">
    <location>
        <position position="447"/>
    </location>
    <ligand>
        <name>meso-2,6-diaminopimelate</name>
        <dbReference type="ChEBI" id="CHEBI:57791"/>
    </ligand>
</feature>
<feature type="binding site" evidence="1">
    <location>
        <position position="451"/>
    </location>
    <ligand>
        <name>meso-2,6-diaminopimelate</name>
        <dbReference type="ChEBI" id="CHEBI:57791"/>
    </ligand>
</feature>
<feature type="modified residue" description="N6-carboxylysine" evidence="1">
    <location>
        <position position="217"/>
    </location>
</feature>
<reference key="1">
    <citation type="journal article" date="1998" name="Nature">
        <title>The complete genome of the hyperthermophilic bacterium Aquifex aeolicus.</title>
        <authorList>
            <person name="Deckert G."/>
            <person name="Warren P.V."/>
            <person name="Gaasterland T."/>
            <person name="Young W.G."/>
            <person name="Lenox A.L."/>
            <person name="Graham D.E."/>
            <person name="Overbeek R."/>
            <person name="Snead M.A."/>
            <person name="Keller M."/>
            <person name="Aujay M."/>
            <person name="Huber R."/>
            <person name="Feldman R.A."/>
            <person name="Short J.M."/>
            <person name="Olsen G.J."/>
            <person name="Swanson R.V."/>
        </authorList>
    </citation>
    <scope>NUCLEOTIDE SEQUENCE [LARGE SCALE GENOMIC DNA]</scope>
    <source>
        <strain>VF5</strain>
    </source>
</reference>
<protein>
    <recommendedName>
        <fullName evidence="1">UDP-N-acetylmuramoyl-L-alanyl-D-glutamate--2,6-diaminopimelate ligase</fullName>
        <ecNumber evidence="1">6.3.2.13</ecNumber>
    </recommendedName>
    <alternativeName>
        <fullName evidence="1">Meso-A2pm-adding enzyme</fullName>
    </alternativeName>
    <alternativeName>
        <fullName evidence="1">Meso-diaminopimelate-adding enzyme</fullName>
    </alternativeName>
    <alternativeName>
        <fullName evidence="1">UDP-MurNAc-L-Ala-D-Glu:meso-diaminopimelate ligase</fullName>
    </alternativeName>
    <alternativeName>
        <fullName evidence="1">UDP-MurNAc-tripeptide synthetase</fullName>
    </alternativeName>
    <alternativeName>
        <fullName evidence="1">UDP-N-acetylmuramyl-tripeptide synthetase</fullName>
    </alternativeName>
</protein>
<comment type="function">
    <text evidence="1">Catalyzes the addition of meso-diaminopimelic acid to the nucleotide precursor UDP-N-acetylmuramoyl-L-alanyl-D-glutamate (UMAG) in the biosynthesis of bacterial cell-wall peptidoglycan.</text>
</comment>
<comment type="catalytic activity">
    <reaction evidence="1">
        <text>UDP-N-acetyl-alpha-D-muramoyl-L-alanyl-D-glutamate + meso-2,6-diaminopimelate + ATP = UDP-N-acetyl-alpha-D-muramoyl-L-alanyl-gamma-D-glutamyl-meso-2,6-diaminopimelate + ADP + phosphate + H(+)</text>
        <dbReference type="Rhea" id="RHEA:23676"/>
        <dbReference type="ChEBI" id="CHEBI:15378"/>
        <dbReference type="ChEBI" id="CHEBI:30616"/>
        <dbReference type="ChEBI" id="CHEBI:43474"/>
        <dbReference type="ChEBI" id="CHEBI:57791"/>
        <dbReference type="ChEBI" id="CHEBI:83900"/>
        <dbReference type="ChEBI" id="CHEBI:83905"/>
        <dbReference type="ChEBI" id="CHEBI:456216"/>
        <dbReference type="EC" id="6.3.2.13"/>
    </reaction>
</comment>
<comment type="cofactor">
    <cofactor evidence="1">
        <name>Mg(2+)</name>
        <dbReference type="ChEBI" id="CHEBI:18420"/>
    </cofactor>
</comment>
<comment type="pathway">
    <text evidence="1">Cell wall biogenesis; peptidoglycan biosynthesis.</text>
</comment>
<comment type="subcellular location">
    <subcellularLocation>
        <location evidence="1">Cytoplasm</location>
    </subcellularLocation>
</comment>
<comment type="PTM">
    <text evidence="1">Carboxylation is probably crucial for Mg(2+) binding and, consequently, for the gamma-phosphate positioning of ATP.</text>
</comment>
<comment type="similarity">
    <text evidence="1">Belongs to the MurCDEF family. MurE subfamily.</text>
</comment>
<name>MURE_AQUAE</name>
<gene>
    <name evidence="1" type="primary">murE</name>
    <name type="ordered locus">aq_1747</name>
</gene>
<evidence type="ECO:0000255" key="1">
    <source>
        <dbReference type="HAMAP-Rule" id="MF_00208"/>
    </source>
</evidence>
<dbReference type="EC" id="6.3.2.13" evidence="1"/>
<dbReference type="EMBL" id="AE000657">
    <property type="protein sequence ID" value="AAC07591.1"/>
    <property type="molecule type" value="Genomic_DNA"/>
</dbReference>
<dbReference type="PIR" id="E70450">
    <property type="entry name" value="E70450"/>
</dbReference>
<dbReference type="RefSeq" id="NP_214197.1">
    <property type="nucleotide sequence ID" value="NC_000918.1"/>
</dbReference>
<dbReference type="SMR" id="O67631"/>
<dbReference type="FunCoup" id="O67631">
    <property type="interactions" value="485"/>
</dbReference>
<dbReference type="STRING" id="224324.aq_1747"/>
<dbReference type="EnsemblBacteria" id="AAC07591">
    <property type="protein sequence ID" value="AAC07591"/>
    <property type="gene ID" value="aq_1747"/>
</dbReference>
<dbReference type="KEGG" id="aae:aq_1747"/>
<dbReference type="PATRIC" id="fig|224324.8.peg.1345"/>
<dbReference type="eggNOG" id="COG0769">
    <property type="taxonomic scope" value="Bacteria"/>
</dbReference>
<dbReference type="HOGENOM" id="CLU_022291_4_1_0"/>
<dbReference type="InParanoid" id="O67631"/>
<dbReference type="OrthoDB" id="9800958at2"/>
<dbReference type="UniPathway" id="UPA00219"/>
<dbReference type="Proteomes" id="UP000000798">
    <property type="component" value="Chromosome"/>
</dbReference>
<dbReference type="GO" id="GO:0005737">
    <property type="term" value="C:cytoplasm"/>
    <property type="evidence" value="ECO:0007669"/>
    <property type="project" value="UniProtKB-SubCell"/>
</dbReference>
<dbReference type="GO" id="GO:0005524">
    <property type="term" value="F:ATP binding"/>
    <property type="evidence" value="ECO:0007669"/>
    <property type="project" value="UniProtKB-UniRule"/>
</dbReference>
<dbReference type="GO" id="GO:0000287">
    <property type="term" value="F:magnesium ion binding"/>
    <property type="evidence" value="ECO:0007669"/>
    <property type="project" value="UniProtKB-UniRule"/>
</dbReference>
<dbReference type="GO" id="GO:0004326">
    <property type="term" value="F:tetrahydrofolylpolyglutamate synthase activity"/>
    <property type="evidence" value="ECO:0007669"/>
    <property type="project" value="InterPro"/>
</dbReference>
<dbReference type="GO" id="GO:0008765">
    <property type="term" value="F:UDP-N-acetylmuramoylalanyl-D-glutamate-2,6-diaminopimelate ligase activity"/>
    <property type="evidence" value="ECO:0007669"/>
    <property type="project" value="UniProtKB-UniRule"/>
</dbReference>
<dbReference type="GO" id="GO:0051301">
    <property type="term" value="P:cell division"/>
    <property type="evidence" value="ECO:0007669"/>
    <property type="project" value="UniProtKB-KW"/>
</dbReference>
<dbReference type="GO" id="GO:0071555">
    <property type="term" value="P:cell wall organization"/>
    <property type="evidence" value="ECO:0007669"/>
    <property type="project" value="UniProtKB-KW"/>
</dbReference>
<dbReference type="GO" id="GO:0009252">
    <property type="term" value="P:peptidoglycan biosynthetic process"/>
    <property type="evidence" value="ECO:0007669"/>
    <property type="project" value="UniProtKB-UniRule"/>
</dbReference>
<dbReference type="GO" id="GO:0008360">
    <property type="term" value="P:regulation of cell shape"/>
    <property type="evidence" value="ECO:0007669"/>
    <property type="project" value="UniProtKB-KW"/>
</dbReference>
<dbReference type="Gene3D" id="3.90.190.20">
    <property type="entry name" value="Mur ligase, C-terminal domain"/>
    <property type="match status" value="1"/>
</dbReference>
<dbReference type="Gene3D" id="3.40.1190.10">
    <property type="entry name" value="Mur-like, catalytic domain"/>
    <property type="match status" value="1"/>
</dbReference>
<dbReference type="Gene3D" id="3.40.1390.10">
    <property type="entry name" value="MurE/MurF, N-terminal domain"/>
    <property type="match status" value="1"/>
</dbReference>
<dbReference type="HAMAP" id="MF_00208">
    <property type="entry name" value="MurE"/>
    <property type="match status" value="1"/>
</dbReference>
<dbReference type="InterPro" id="IPR018109">
    <property type="entry name" value="Folylpolyglutamate_synth_CS"/>
</dbReference>
<dbReference type="InterPro" id="IPR036565">
    <property type="entry name" value="Mur-like_cat_sf"/>
</dbReference>
<dbReference type="InterPro" id="IPR004101">
    <property type="entry name" value="Mur_ligase_C"/>
</dbReference>
<dbReference type="InterPro" id="IPR036615">
    <property type="entry name" value="Mur_ligase_C_dom_sf"/>
</dbReference>
<dbReference type="InterPro" id="IPR013221">
    <property type="entry name" value="Mur_ligase_cen"/>
</dbReference>
<dbReference type="InterPro" id="IPR000713">
    <property type="entry name" value="Mur_ligase_N"/>
</dbReference>
<dbReference type="InterPro" id="IPR035911">
    <property type="entry name" value="MurE/MurF_N"/>
</dbReference>
<dbReference type="InterPro" id="IPR005761">
    <property type="entry name" value="UDP-N-AcMur-Glu-dNH2Pim_ligase"/>
</dbReference>
<dbReference type="NCBIfam" id="TIGR01085">
    <property type="entry name" value="murE"/>
    <property type="match status" value="1"/>
</dbReference>
<dbReference type="NCBIfam" id="NF001124">
    <property type="entry name" value="PRK00139.1-2"/>
    <property type="match status" value="1"/>
</dbReference>
<dbReference type="NCBIfam" id="NF001126">
    <property type="entry name" value="PRK00139.1-4"/>
    <property type="match status" value="1"/>
</dbReference>
<dbReference type="PANTHER" id="PTHR23135">
    <property type="entry name" value="MUR LIGASE FAMILY MEMBER"/>
    <property type="match status" value="1"/>
</dbReference>
<dbReference type="PANTHER" id="PTHR23135:SF4">
    <property type="entry name" value="UDP-N-ACETYLMURAMOYL-L-ALANYL-D-GLUTAMATE--2,6-DIAMINOPIMELATE LIGASE MURE HOMOLOG, CHLOROPLASTIC"/>
    <property type="match status" value="1"/>
</dbReference>
<dbReference type="Pfam" id="PF01225">
    <property type="entry name" value="Mur_ligase"/>
    <property type="match status" value="1"/>
</dbReference>
<dbReference type="Pfam" id="PF02875">
    <property type="entry name" value="Mur_ligase_C"/>
    <property type="match status" value="1"/>
</dbReference>
<dbReference type="Pfam" id="PF08245">
    <property type="entry name" value="Mur_ligase_M"/>
    <property type="match status" value="1"/>
</dbReference>
<dbReference type="SUPFAM" id="SSF53623">
    <property type="entry name" value="MurD-like peptide ligases, catalytic domain"/>
    <property type="match status" value="1"/>
</dbReference>
<dbReference type="SUPFAM" id="SSF53244">
    <property type="entry name" value="MurD-like peptide ligases, peptide-binding domain"/>
    <property type="match status" value="1"/>
</dbReference>
<dbReference type="SUPFAM" id="SSF63418">
    <property type="entry name" value="MurE/MurF N-terminal domain"/>
    <property type="match status" value="1"/>
</dbReference>
<sequence>MGSNPTPSASVLYMDLSFILKRVKGITLNSKEVKKGYLFFAIKGTRFDGHNFIREAEERGAYAVVVERPVSSKVPVIIVEDTRKALGKSAHEFFGKPSERLNVIGITGTNGKTTTTHLIEKILLEAGEKTGLIGTIYYRLGEKILGSGRTTPDQITWHRTLKEFYELGAKNVVAEISSHALDQYRVYPTRFEAVLFTNLSQDHLDYHKTMEDYFASKAKLFTEYESKVKIINADDTYGKRLLKITHGEIITYGKKGDLKILNFRTDFRGSALRIAFKGKEYEFSTNLIGDFQAYNLSAAIAYALWKGIEPDLIQRALKCVNVPGRFEVVHSDKFTVIIDYAHTPDAVENVLRTARKLSKGKLISVFGAGGNRDREKRPLMGKAAEKYSDLIILTSDNPRDEEPEKIIEDILDGISEKDKVIIEADRRKAIKKAIDMAKEGDMVAILGKGHEDYQEIKGVKYPFSDAQVVKEILGGDGCIGKD</sequence>
<accession>O67631</accession>
<proteinExistence type="inferred from homology"/>